<dbReference type="EMBL" id="X62745">
    <property type="protein sequence ID" value="CAA44607.1"/>
    <property type="molecule type" value="mRNA"/>
</dbReference>
<dbReference type="PIR" id="JQ0984">
    <property type="entry name" value="JQ0984"/>
</dbReference>
<dbReference type="PIR" id="T03642">
    <property type="entry name" value="T03642"/>
</dbReference>
<dbReference type="RefSeq" id="NP_001105439.1">
    <property type="nucleotide sequence ID" value="NM_001111969.1"/>
</dbReference>
<dbReference type="SMR" id="P24068"/>
<dbReference type="STRING" id="4577.P24068"/>
<dbReference type="GeneID" id="542394"/>
<dbReference type="KEGG" id="zma:542394"/>
<dbReference type="MaizeGDB" id="64064"/>
<dbReference type="eggNOG" id="ENOG502S1GC">
    <property type="taxonomic scope" value="Eukaryota"/>
</dbReference>
<dbReference type="InParanoid" id="P24068"/>
<dbReference type="OrthoDB" id="551672at2759"/>
<dbReference type="Proteomes" id="UP000007305">
    <property type="component" value="Unplaced"/>
</dbReference>
<dbReference type="ExpressionAtlas" id="P24068">
    <property type="expression patterns" value="baseline and differential"/>
</dbReference>
<dbReference type="GO" id="GO:0005634">
    <property type="term" value="C:nucleus"/>
    <property type="evidence" value="ECO:0000318"/>
    <property type="project" value="GO_Central"/>
</dbReference>
<dbReference type="GO" id="GO:0003700">
    <property type="term" value="F:DNA-binding transcription factor activity"/>
    <property type="evidence" value="ECO:0000318"/>
    <property type="project" value="GO_Central"/>
</dbReference>
<dbReference type="GO" id="GO:0046982">
    <property type="term" value="F:protein heterodimerization activity"/>
    <property type="evidence" value="ECO:0007669"/>
    <property type="project" value="UniProtKB-ARBA"/>
</dbReference>
<dbReference type="GO" id="GO:0000976">
    <property type="term" value="F:transcription cis-regulatory region binding"/>
    <property type="evidence" value="ECO:0000318"/>
    <property type="project" value="GO_Central"/>
</dbReference>
<dbReference type="GO" id="GO:0045893">
    <property type="term" value="P:positive regulation of DNA-templated transcription"/>
    <property type="evidence" value="ECO:0000318"/>
    <property type="project" value="GO_Central"/>
</dbReference>
<dbReference type="CDD" id="cd14702">
    <property type="entry name" value="bZIP_plant_GBF1"/>
    <property type="match status" value="1"/>
</dbReference>
<dbReference type="FunFam" id="1.20.5.170:FF:000123">
    <property type="entry name" value="Basic region/leucine zipper protein"/>
    <property type="match status" value="1"/>
</dbReference>
<dbReference type="Gene3D" id="1.20.5.170">
    <property type="match status" value="1"/>
</dbReference>
<dbReference type="InterPro" id="IPR004827">
    <property type="entry name" value="bZIP"/>
</dbReference>
<dbReference type="InterPro" id="IPR045314">
    <property type="entry name" value="bZIP_plant_GBF1"/>
</dbReference>
<dbReference type="InterPro" id="IPR046347">
    <property type="entry name" value="bZIP_sf"/>
</dbReference>
<dbReference type="PANTHER" id="PTHR45764">
    <property type="entry name" value="BZIP TRANSCRIPTION FACTOR 44"/>
    <property type="match status" value="1"/>
</dbReference>
<dbReference type="PANTHER" id="PTHR45764:SF34">
    <property type="entry name" value="BZIP TRANSCRIPTION FACTOR 53"/>
    <property type="match status" value="1"/>
</dbReference>
<dbReference type="Pfam" id="PF00170">
    <property type="entry name" value="bZIP_1"/>
    <property type="match status" value="1"/>
</dbReference>
<dbReference type="SMART" id="SM00338">
    <property type="entry name" value="BRLZ"/>
    <property type="match status" value="1"/>
</dbReference>
<dbReference type="SUPFAM" id="SSF57959">
    <property type="entry name" value="Leucine zipper domain"/>
    <property type="match status" value="1"/>
</dbReference>
<dbReference type="PROSITE" id="PS50217">
    <property type="entry name" value="BZIP"/>
    <property type="match status" value="1"/>
</dbReference>
<dbReference type="PROSITE" id="PS00036">
    <property type="entry name" value="BZIP_BASIC"/>
    <property type="match status" value="1"/>
</dbReference>
<feature type="chain" id="PRO_0000076564" description="Ocs element-binding factor 1">
    <location>
        <begin position="1"/>
        <end position="151"/>
    </location>
</feature>
<feature type="domain" description="bZIP" evidence="1">
    <location>
        <begin position="24"/>
        <end position="87"/>
    </location>
</feature>
<feature type="region of interest" description="Disordered" evidence="2">
    <location>
        <begin position="1"/>
        <end position="47"/>
    </location>
</feature>
<feature type="region of interest" description="Basic motif" evidence="1">
    <location>
        <begin position="26"/>
        <end position="45"/>
    </location>
</feature>
<feature type="region of interest" description="Leucine-zipper" evidence="1">
    <location>
        <begin position="52"/>
        <end position="59"/>
    </location>
</feature>
<feature type="compositionally biased region" description="Polar residues" evidence="2">
    <location>
        <begin position="1"/>
        <end position="17"/>
    </location>
</feature>
<feature type="compositionally biased region" description="Basic and acidic residues" evidence="2">
    <location>
        <begin position="22"/>
        <end position="39"/>
    </location>
</feature>
<reference key="1">
    <citation type="journal article" date="1990" name="Plant Cell">
        <title>OCSBF-1, a maize ocs enhancer binding factor: isolation and expression during development.</title>
        <authorList>
            <person name="Singh K."/>
            <person name="Dennis E.S."/>
            <person name="Ellis J.G."/>
            <person name="Llewellyn D.J."/>
            <person name="Tokuhisa J.G."/>
            <person name="Wahleithner J.A."/>
            <person name="Peacock W.J."/>
        </authorList>
    </citation>
    <scope>NUCLEOTIDE SEQUENCE [MRNA]</scope>
    <source>
        <tissue>Root</tissue>
    </source>
</reference>
<reference key="2">
    <citation type="submission" date="1994-01" db="EMBL/GenBank/DDBJ databases">
        <authorList>
            <person name="Singh K.B."/>
        </authorList>
    </citation>
    <scope>SEQUENCE REVISION TO C-TERMINUS</scope>
</reference>
<comment type="function">
    <text>May contribute to developmentally specific patterns of gene expression. Binds specifically to ocs elements which are transcriptional enhancer found in the promoters of several plant genes. OCSBF-1 is able to bind to a site within each half of the ocs element as well as to animal AP-1 and CREB sites.</text>
</comment>
<comment type="subcellular location">
    <subcellularLocation>
        <location>Nucleus</location>
    </subcellularLocation>
</comment>
<comment type="tissue specificity">
    <text>Roots and shoots of young plants, and basal portion of leaves.</text>
</comment>
<comment type="miscellaneous">
    <text>A derivative of OCSBF-1 that contains only the 76 N-terminal amino acids is still able to bind to the ocs element.</text>
</comment>
<comment type="similarity">
    <text evidence="3">Belongs to the bZIP family.</text>
</comment>
<evidence type="ECO:0000255" key="1">
    <source>
        <dbReference type="PROSITE-ProRule" id="PRU00978"/>
    </source>
</evidence>
<evidence type="ECO:0000256" key="2">
    <source>
        <dbReference type="SAM" id="MobiDB-lite"/>
    </source>
</evidence>
<evidence type="ECO:0000305" key="3"/>
<name>OCS1_MAIZE</name>
<keyword id="KW-0238">DNA-binding</keyword>
<keyword id="KW-0539">Nucleus</keyword>
<keyword id="KW-1185">Reference proteome</keyword>
<keyword id="KW-0804">Transcription</keyword>
<keyword id="KW-0805">Transcription regulation</keyword>
<organism>
    <name type="scientific">Zea mays</name>
    <name type="common">Maize</name>
    <dbReference type="NCBI Taxonomy" id="4577"/>
    <lineage>
        <taxon>Eukaryota</taxon>
        <taxon>Viridiplantae</taxon>
        <taxon>Streptophyta</taxon>
        <taxon>Embryophyta</taxon>
        <taxon>Tracheophyta</taxon>
        <taxon>Spermatophyta</taxon>
        <taxon>Magnoliopsida</taxon>
        <taxon>Liliopsida</taxon>
        <taxon>Poales</taxon>
        <taxon>Poaceae</taxon>
        <taxon>PACMAD clade</taxon>
        <taxon>Panicoideae</taxon>
        <taxon>Andropogonodae</taxon>
        <taxon>Andropogoneae</taxon>
        <taxon>Tripsacinae</taxon>
        <taxon>Zea</taxon>
    </lineage>
</organism>
<accession>P24068</accession>
<gene>
    <name type="primary">OBF1</name>
</gene>
<protein>
    <recommendedName>
        <fullName>Ocs element-binding factor 1</fullName>
        <shortName>OCSBF-1</shortName>
    </recommendedName>
</protein>
<sequence>MSSSSLSPTAGRTSGSDGDSAADTHRREKRRLSNRESARRSRLRKQQHLDELVQEVARLQADNARVAARARDIASQYTRVEQENTVLRARAAELGDRLRSVNEVLRLVEEFSGVAMDIQEEMPADDPLLRPWQLPYPAAAMPMGAPHMLHY</sequence>
<proteinExistence type="evidence at transcript level"/>